<comment type="function">
    <text evidence="1">Located at the top of the head of the 30S subunit, it contacts several helices of the 16S rRNA. In the 70S ribosome it contacts the 23S rRNA (bridge B1a) and protein L5 of the 50S subunit (bridge B1b), connecting the 2 subunits; these bridges are implicated in subunit movement. Contacts the tRNAs in the A and P-sites.</text>
</comment>
<comment type="subunit">
    <text evidence="1">Part of the 30S ribosomal subunit. Forms a loose heterodimer with protein S19. Forms two bridges to the 50S subunit in the 70S ribosome.</text>
</comment>
<comment type="similarity">
    <text evidence="1">Belongs to the universal ribosomal protein uS13 family.</text>
</comment>
<dbReference type="EMBL" id="AE016828">
    <property type="protein sequence ID" value="AAO89818.1"/>
    <property type="molecule type" value="Genomic_DNA"/>
</dbReference>
<dbReference type="RefSeq" id="NP_819304.1">
    <property type="nucleotide sequence ID" value="NC_002971.3"/>
</dbReference>
<dbReference type="RefSeq" id="WP_010957466.1">
    <property type="nucleotide sequence ID" value="NC_002971.4"/>
</dbReference>
<dbReference type="SMR" id="P59753"/>
<dbReference type="STRING" id="227377.CBU_0260"/>
<dbReference type="DNASU" id="1208141"/>
<dbReference type="EnsemblBacteria" id="AAO89818">
    <property type="protein sequence ID" value="AAO89818"/>
    <property type="gene ID" value="CBU_0260"/>
</dbReference>
<dbReference type="GeneID" id="1208141"/>
<dbReference type="KEGG" id="cbu:CBU_0260"/>
<dbReference type="PATRIC" id="fig|227377.7.peg.255"/>
<dbReference type="eggNOG" id="COG0099">
    <property type="taxonomic scope" value="Bacteria"/>
</dbReference>
<dbReference type="HOGENOM" id="CLU_103849_1_2_6"/>
<dbReference type="OrthoDB" id="9803610at2"/>
<dbReference type="Proteomes" id="UP000002671">
    <property type="component" value="Chromosome"/>
</dbReference>
<dbReference type="GO" id="GO:0005829">
    <property type="term" value="C:cytosol"/>
    <property type="evidence" value="ECO:0000318"/>
    <property type="project" value="GO_Central"/>
</dbReference>
<dbReference type="GO" id="GO:0015935">
    <property type="term" value="C:small ribosomal subunit"/>
    <property type="evidence" value="ECO:0000318"/>
    <property type="project" value="GO_Central"/>
</dbReference>
<dbReference type="GO" id="GO:0019843">
    <property type="term" value="F:rRNA binding"/>
    <property type="evidence" value="ECO:0007669"/>
    <property type="project" value="UniProtKB-UniRule"/>
</dbReference>
<dbReference type="GO" id="GO:0003735">
    <property type="term" value="F:structural constituent of ribosome"/>
    <property type="evidence" value="ECO:0007669"/>
    <property type="project" value="InterPro"/>
</dbReference>
<dbReference type="GO" id="GO:0000049">
    <property type="term" value="F:tRNA binding"/>
    <property type="evidence" value="ECO:0007669"/>
    <property type="project" value="UniProtKB-UniRule"/>
</dbReference>
<dbReference type="GO" id="GO:0006412">
    <property type="term" value="P:translation"/>
    <property type="evidence" value="ECO:0007669"/>
    <property type="project" value="UniProtKB-UniRule"/>
</dbReference>
<dbReference type="FunFam" id="1.10.8.50:FF:000001">
    <property type="entry name" value="30S ribosomal protein S13"/>
    <property type="match status" value="1"/>
</dbReference>
<dbReference type="Gene3D" id="1.10.8.50">
    <property type="match status" value="1"/>
</dbReference>
<dbReference type="Gene3D" id="4.10.910.10">
    <property type="entry name" value="30s ribosomal protein s13, domain 2"/>
    <property type="match status" value="1"/>
</dbReference>
<dbReference type="HAMAP" id="MF_01315">
    <property type="entry name" value="Ribosomal_uS13"/>
    <property type="match status" value="1"/>
</dbReference>
<dbReference type="InterPro" id="IPR027437">
    <property type="entry name" value="Rbsml_uS13_C"/>
</dbReference>
<dbReference type="InterPro" id="IPR001892">
    <property type="entry name" value="Ribosomal_uS13"/>
</dbReference>
<dbReference type="InterPro" id="IPR010979">
    <property type="entry name" value="Ribosomal_uS13-like_H2TH"/>
</dbReference>
<dbReference type="InterPro" id="IPR019980">
    <property type="entry name" value="Ribosomal_uS13_bac-type"/>
</dbReference>
<dbReference type="InterPro" id="IPR018269">
    <property type="entry name" value="Ribosomal_uS13_CS"/>
</dbReference>
<dbReference type="NCBIfam" id="TIGR03631">
    <property type="entry name" value="uS13_bact"/>
    <property type="match status" value="1"/>
</dbReference>
<dbReference type="PANTHER" id="PTHR10871">
    <property type="entry name" value="30S RIBOSOMAL PROTEIN S13/40S RIBOSOMAL PROTEIN S18"/>
    <property type="match status" value="1"/>
</dbReference>
<dbReference type="PANTHER" id="PTHR10871:SF1">
    <property type="entry name" value="SMALL RIBOSOMAL SUBUNIT PROTEIN US13M"/>
    <property type="match status" value="1"/>
</dbReference>
<dbReference type="Pfam" id="PF00416">
    <property type="entry name" value="Ribosomal_S13"/>
    <property type="match status" value="1"/>
</dbReference>
<dbReference type="PIRSF" id="PIRSF002134">
    <property type="entry name" value="Ribosomal_S13"/>
    <property type="match status" value="1"/>
</dbReference>
<dbReference type="SUPFAM" id="SSF46946">
    <property type="entry name" value="S13-like H2TH domain"/>
    <property type="match status" value="1"/>
</dbReference>
<dbReference type="PROSITE" id="PS00646">
    <property type="entry name" value="RIBOSOMAL_S13_1"/>
    <property type="match status" value="1"/>
</dbReference>
<dbReference type="PROSITE" id="PS50159">
    <property type="entry name" value="RIBOSOMAL_S13_2"/>
    <property type="match status" value="1"/>
</dbReference>
<protein>
    <recommendedName>
        <fullName evidence="1">Small ribosomal subunit protein uS13</fullName>
    </recommendedName>
    <alternativeName>
        <fullName evidence="3">30S ribosomal protein S13</fullName>
    </alternativeName>
</protein>
<proteinExistence type="inferred from homology"/>
<keyword id="KW-1185">Reference proteome</keyword>
<keyword id="KW-0687">Ribonucleoprotein</keyword>
<keyword id="KW-0689">Ribosomal protein</keyword>
<keyword id="KW-0694">RNA-binding</keyword>
<keyword id="KW-0699">rRNA-binding</keyword>
<keyword id="KW-0820">tRNA-binding</keyword>
<sequence>MAARIAGVNIPVQKHARIALQAIYGIGNSRALEICKEAKIDPATKVKDLSEAELDALRTEVGKFSVEGDLRRERSMDIKRKMDLGAYEGIRHRRGLPLRGQRTRSNARTRKGKRKPIRS</sequence>
<reference key="1">
    <citation type="journal article" date="2003" name="Proc. Natl. Acad. Sci. U.S.A.">
        <title>Complete genome sequence of the Q-fever pathogen, Coxiella burnetii.</title>
        <authorList>
            <person name="Seshadri R."/>
            <person name="Paulsen I.T."/>
            <person name="Eisen J.A."/>
            <person name="Read T.D."/>
            <person name="Nelson K.E."/>
            <person name="Nelson W.C."/>
            <person name="Ward N.L."/>
            <person name="Tettelin H."/>
            <person name="Davidsen T.M."/>
            <person name="Beanan M.J."/>
            <person name="DeBoy R.T."/>
            <person name="Daugherty S.C."/>
            <person name="Brinkac L.M."/>
            <person name="Madupu R."/>
            <person name="Dodson R.J."/>
            <person name="Khouri H.M."/>
            <person name="Lee K.H."/>
            <person name="Carty H.A."/>
            <person name="Scanlan D."/>
            <person name="Heinzen R.A."/>
            <person name="Thompson H.A."/>
            <person name="Samuel J.E."/>
            <person name="Fraser C.M."/>
            <person name="Heidelberg J.F."/>
        </authorList>
    </citation>
    <scope>NUCLEOTIDE SEQUENCE [LARGE SCALE GENOMIC DNA]</scope>
    <source>
        <strain>RSA 493 / Nine Mile phase I</strain>
    </source>
</reference>
<evidence type="ECO:0000255" key="1">
    <source>
        <dbReference type="HAMAP-Rule" id="MF_01315"/>
    </source>
</evidence>
<evidence type="ECO:0000256" key="2">
    <source>
        <dbReference type="SAM" id="MobiDB-lite"/>
    </source>
</evidence>
<evidence type="ECO:0000305" key="3"/>
<feature type="chain" id="PRO_0000132087" description="Small ribosomal subunit protein uS13">
    <location>
        <begin position="1"/>
        <end position="119"/>
    </location>
</feature>
<feature type="region of interest" description="Disordered" evidence="2">
    <location>
        <begin position="93"/>
        <end position="119"/>
    </location>
</feature>
<name>RS13_COXBU</name>
<gene>
    <name evidence="1" type="primary">rpsM</name>
    <name type="ordered locus">CBU_0260</name>
</gene>
<organism>
    <name type="scientific">Coxiella burnetii (strain RSA 493 / Nine Mile phase I)</name>
    <dbReference type="NCBI Taxonomy" id="227377"/>
    <lineage>
        <taxon>Bacteria</taxon>
        <taxon>Pseudomonadati</taxon>
        <taxon>Pseudomonadota</taxon>
        <taxon>Gammaproteobacteria</taxon>
        <taxon>Legionellales</taxon>
        <taxon>Coxiellaceae</taxon>
        <taxon>Coxiella</taxon>
    </lineage>
</organism>
<accession>P59753</accession>